<feature type="chain" id="PRO_0000375988" description="Diacylglycerol kinase eta">
    <location>
        <begin position="1"/>
        <end position="1925"/>
    </location>
</feature>
<feature type="domain" description="PH" evidence="3">
    <location>
        <begin position="82"/>
        <end position="175"/>
    </location>
</feature>
<feature type="domain" description="DAGKc" evidence="6">
    <location>
        <begin position="350"/>
        <end position="486"/>
    </location>
</feature>
<feature type="domain" description="SAM" evidence="4">
    <location>
        <begin position="1862"/>
        <end position="1925"/>
    </location>
</feature>
<feature type="zinc finger region" description="Phorbol-ester/DAG-type 1" evidence="5">
    <location>
        <begin position="195"/>
        <end position="245"/>
    </location>
</feature>
<feature type="zinc finger region" description="Phorbol-ester/DAG-type 2" evidence="5">
    <location>
        <begin position="268"/>
        <end position="319"/>
    </location>
</feature>
<feature type="region of interest" description="Disordered" evidence="7">
    <location>
        <begin position="620"/>
        <end position="641"/>
    </location>
</feature>
<feature type="region of interest" description="Disordered" evidence="7">
    <location>
        <begin position="783"/>
        <end position="805"/>
    </location>
</feature>
<feature type="region of interest" description="Disordered" evidence="7">
    <location>
        <begin position="847"/>
        <end position="872"/>
    </location>
</feature>
<feature type="region of interest" description="Disordered" evidence="7">
    <location>
        <begin position="1013"/>
        <end position="1065"/>
    </location>
</feature>
<feature type="region of interest" description="Disordered" evidence="7">
    <location>
        <begin position="1113"/>
        <end position="1141"/>
    </location>
</feature>
<feature type="region of interest" description="Disordered" evidence="7">
    <location>
        <begin position="1167"/>
        <end position="1234"/>
    </location>
</feature>
<feature type="region of interest" description="Disordered" evidence="7">
    <location>
        <begin position="1256"/>
        <end position="1276"/>
    </location>
</feature>
<feature type="region of interest" description="Disordered" evidence="7">
    <location>
        <begin position="1385"/>
        <end position="1405"/>
    </location>
</feature>
<feature type="compositionally biased region" description="Polar residues" evidence="7">
    <location>
        <begin position="792"/>
        <end position="802"/>
    </location>
</feature>
<feature type="compositionally biased region" description="Basic and acidic residues" evidence="7">
    <location>
        <begin position="863"/>
        <end position="872"/>
    </location>
</feature>
<feature type="compositionally biased region" description="Basic and acidic residues" evidence="7">
    <location>
        <begin position="1115"/>
        <end position="1128"/>
    </location>
</feature>
<feature type="compositionally biased region" description="Low complexity" evidence="7">
    <location>
        <begin position="1167"/>
        <end position="1187"/>
    </location>
</feature>
<feature type="compositionally biased region" description="Basic and acidic residues" evidence="7">
    <location>
        <begin position="1386"/>
        <end position="1405"/>
    </location>
</feature>
<sequence>MANLKPNTLHVDNLSPRQRSLSSGLSSACSSGSVSPVPIIPIISISRDGEESETESEIEPEPARIFHRRMSTHSKRNNNLSAIIREGYLMKHTWSFQRWRRRYFRLKRSYLYYAKDAKCDVFDEIDLSELCYFECSIKNVNHSFQIITPTRSLVLCADSRREMEDWLGSLKTATAPQRPRGDSFLIDQHDILSNHHHWYATSHARPTYCNVCRDALSGVTSHGLSCEVCKCKVHKRCAAKAIANCKWTTLATVGKDIIEQPDGSLIMPHQWMEGNLPVSAVCAVCKKTCGSVLRLQDWRCLWCRDTVHVACRPQMPIVCPIGPAKLSVVPPTSVHSISTDDAWDVVSPKGNFSPLLVFVNSKSGDNQGVKFLRRFKQLLNPAQVFDLISTGPSLGLRLFRHFEMFRILVCSGDGSVGWVLSEIDRFNMHKQCQVAVMPLGTGNDLARVLGWGSSCDDDTHLPQILERYESASTKMLDRWSIMVFEKAITVPKMPKMSITTEQEALLTGMVTSANHHLRFIVETNDTQTLISSTRSLCDTVDELVSRICEHHKDDEQLAMKCDILRQKLTMLLDALQEEELGTHSGDDLVATIRSLISRSGPLTTARPSFLNPNISIEKTEKDNINSKERRNSRSLRSSEKEALQCRANSVKRAIYNVVEHSEPGRPKRYQRKLSITPFEALKIPITNSGDSTPCGSPLPIIPPINIISPTMETSRLTCISPLPDTRRDSVDENFFNSINLPAPRQFADSRRSSGVPEVIQEMEEGASGETVYRVGRLSLSGGANIDDAGNRLSPSSEAGENTPTERKVDFLRVPIMTSEPIVDPLSNYRPIEVFERTYYMAREMDKDKERTASGQVESEKEEADVNEKSEPQEPHRALVHTCNLQVPGIVVTPQSQNVYTSENFTIIDTDAQTNTEQSSSEDLGGEASDVLSAISNEECSVASEIFDKPESGHSLGDIIQNLDANNFTHIDSPETSDETEPMPGESLMDDISSVLGHDITNALQDNTITDDTTTLCSEHAGPTKPPRKKSLSALVQSKTHPRRRNSSPPRKAGLARMDSDDNPQQFGFENIVFEIDNRCDDQKIREPPRYCSLAQFVEGNDIARQSFKQLMLDRNSGDNHNDNGKNEEADTPTNSAPTRTYRNLTTTTTSDELETAIKIEINNATTNTTTSTSSSISTTTTTSTTSTVKPLESAMASSTSPTKKSGHGQEISVVVRPPTPLRGDSVKPTASSASSASLLATSSSLLGVRTLNSSEIRRHSSHAPSLAVRDYDKDKDRRHSGFNPNFLTLDPEHARFLSSSPAASRRISCGSLFKKRNQKLNVKRTYGLFSVRFFVVAEPDIRLATLALIRPLIPLPNEALPNLQTLKGSKSSLFMGSTLFGFEHFSAGDKDEKPGKDKERTPTEETNRKLPIINPIVRLPNWPNLANGTGFISKCLMANADTLCAAVSPLMDPDETLLAGYHEKCVMNNYFGIGIDAKISLDFHNKREEHPEKCRSRARNYMWYGVLGSKQLLQKTCKNLEQRVQLECDGQRIPLPELQGIVILNIPSFMGGTNFWGNSSKKEDIFLPPSFDDRVLEVVAVFGSVQMAASRLINLQHHRIAQCQSVQINILGDEEIPIQVDGEAWLQPPGMIRILHKNRVQMLCRNRSLEVSLKTWQEKQRQHSISIQRDTSSTASEHAVSTDEVISERECYVLLNFIEAVSSLVKWVKFLIISHPALQHDLYEVACRASEALESIHPQGKLLEGPSLRTKLVEVIDSSRQLYDDACTLLRDRGHSLILREDLETKLSAALANMEMELKKCSVQKCIDGKLRAYFNVLAPNEEPDGRRKSRPFWVRLRSGSTAGQQQFKPPITNTREAANNWSVNEVVTWLETMQLSEYVDSFLKNDIRGKELLTLGRRDLKDLGVVKVGHVKRILQAIKDLSEN</sequence>
<keyword id="KW-0067">ATP-binding</keyword>
<keyword id="KW-0963">Cytoplasm</keyword>
<keyword id="KW-0418">Kinase</keyword>
<keyword id="KW-0479">Metal-binding</keyword>
<keyword id="KW-0547">Nucleotide-binding</keyword>
<keyword id="KW-0597">Phosphoprotein</keyword>
<keyword id="KW-1185">Reference proteome</keyword>
<keyword id="KW-0677">Repeat</keyword>
<keyword id="KW-0808">Transferase</keyword>
<keyword id="KW-0862">Zinc</keyword>
<keyword id="KW-0863">Zinc-finger</keyword>
<name>DGKH_DROMO</name>
<organism>
    <name type="scientific">Drosophila mojavensis</name>
    <name type="common">Fruit fly</name>
    <dbReference type="NCBI Taxonomy" id="7230"/>
    <lineage>
        <taxon>Eukaryota</taxon>
        <taxon>Metazoa</taxon>
        <taxon>Ecdysozoa</taxon>
        <taxon>Arthropoda</taxon>
        <taxon>Hexapoda</taxon>
        <taxon>Insecta</taxon>
        <taxon>Pterygota</taxon>
        <taxon>Neoptera</taxon>
        <taxon>Endopterygota</taxon>
        <taxon>Diptera</taxon>
        <taxon>Brachycera</taxon>
        <taxon>Muscomorpha</taxon>
        <taxon>Ephydroidea</taxon>
        <taxon>Drosophilidae</taxon>
        <taxon>Drosophila</taxon>
    </lineage>
</organism>
<reference evidence="8" key="1">
    <citation type="journal article" date="2007" name="Nature">
        <title>Evolution of genes and genomes on the Drosophila phylogeny.</title>
        <authorList>
            <consortium name="Drosophila 12 genomes consortium"/>
        </authorList>
    </citation>
    <scope>NUCLEOTIDE SEQUENCE [LARGE SCALE GENOMIC DNA]</scope>
    <source>
        <strain evidence="8">Tucson 15081-1352.22</strain>
    </source>
</reference>
<proteinExistence type="inferred from homology"/>
<dbReference type="EC" id="2.7.1.107"/>
<dbReference type="EMBL" id="CH933806">
    <property type="protein sequence ID" value="EDW14204.1"/>
    <property type="molecule type" value="Genomic_DNA"/>
</dbReference>
<dbReference type="RefSeq" id="XP_001998743.2">
    <property type="nucleotide sequence ID" value="XM_001998707.2"/>
</dbReference>
<dbReference type="SMR" id="B4K6T8"/>
<dbReference type="FunCoup" id="B4K6T8">
    <property type="interactions" value="332"/>
</dbReference>
<dbReference type="eggNOG" id="KOG1170">
    <property type="taxonomic scope" value="Eukaryota"/>
</dbReference>
<dbReference type="HOGENOM" id="CLU_001799_1_1_1"/>
<dbReference type="InParanoid" id="B4K6T8"/>
<dbReference type="OMA" id="SKAPCEK"/>
<dbReference type="OrthoDB" id="196165at2759"/>
<dbReference type="PhylomeDB" id="B4K6T8"/>
<dbReference type="Proteomes" id="UP000009192">
    <property type="component" value="Unassembled WGS sequence"/>
</dbReference>
<dbReference type="GO" id="GO:0005737">
    <property type="term" value="C:cytoplasm"/>
    <property type="evidence" value="ECO:0007669"/>
    <property type="project" value="UniProtKB-SubCell"/>
</dbReference>
<dbReference type="GO" id="GO:0005886">
    <property type="term" value="C:plasma membrane"/>
    <property type="evidence" value="ECO:0007669"/>
    <property type="project" value="TreeGrafter"/>
</dbReference>
<dbReference type="GO" id="GO:0005524">
    <property type="term" value="F:ATP binding"/>
    <property type="evidence" value="ECO:0007669"/>
    <property type="project" value="UniProtKB-KW"/>
</dbReference>
<dbReference type="GO" id="GO:0004143">
    <property type="term" value="F:ATP-dependent diacylglycerol kinase activity"/>
    <property type="evidence" value="ECO:0007669"/>
    <property type="project" value="UniProtKB-EC"/>
</dbReference>
<dbReference type="GO" id="GO:0008270">
    <property type="term" value="F:zinc ion binding"/>
    <property type="evidence" value="ECO:0007669"/>
    <property type="project" value="UniProtKB-KW"/>
</dbReference>
<dbReference type="GO" id="GO:0046486">
    <property type="term" value="P:glycerolipid metabolic process"/>
    <property type="evidence" value="ECO:0007669"/>
    <property type="project" value="UniProtKB-ARBA"/>
</dbReference>
<dbReference type="GO" id="GO:0007200">
    <property type="term" value="P:phospholipase C-activating G protein-coupled receptor signaling pathway"/>
    <property type="evidence" value="ECO:0007669"/>
    <property type="project" value="InterPro"/>
</dbReference>
<dbReference type="CDD" id="cd20800">
    <property type="entry name" value="C1_DGK_typeII_rpt1"/>
    <property type="match status" value="1"/>
</dbReference>
<dbReference type="CDD" id="cd20852">
    <property type="entry name" value="C1_DGK_typeII_rpt2"/>
    <property type="match status" value="1"/>
</dbReference>
<dbReference type="CDD" id="cd13274">
    <property type="entry name" value="PH_DGK_type2"/>
    <property type="match status" value="1"/>
</dbReference>
<dbReference type="CDD" id="cd09507">
    <property type="entry name" value="SAM_DGK-delta-eta"/>
    <property type="match status" value="1"/>
</dbReference>
<dbReference type="FunFam" id="1.10.150.50:FF:000021">
    <property type="entry name" value="Diacylglycerol kinase"/>
    <property type="match status" value="1"/>
</dbReference>
<dbReference type="FunFam" id="2.30.29.30:FF:000313">
    <property type="entry name" value="Diacylglycerol kinase"/>
    <property type="match status" value="1"/>
</dbReference>
<dbReference type="FunFam" id="2.60.200.40:FF:000001">
    <property type="entry name" value="Diacylglycerol kinase"/>
    <property type="match status" value="1"/>
</dbReference>
<dbReference type="FunFam" id="3.30.60.20:FF:000002">
    <property type="entry name" value="Diacylglycerol kinase"/>
    <property type="match status" value="1"/>
</dbReference>
<dbReference type="FunFam" id="3.30.60.20:FF:000029">
    <property type="entry name" value="Diacylglycerol kinase"/>
    <property type="match status" value="1"/>
</dbReference>
<dbReference type="FunFam" id="3.40.50.10330:FF:000001">
    <property type="entry name" value="Diacylglycerol kinase"/>
    <property type="match status" value="1"/>
</dbReference>
<dbReference type="Gene3D" id="2.60.200.40">
    <property type="match status" value="1"/>
</dbReference>
<dbReference type="Gene3D" id="3.30.60.20">
    <property type="match status" value="2"/>
</dbReference>
<dbReference type="Gene3D" id="2.30.29.30">
    <property type="entry name" value="Pleckstrin-homology domain (PH domain)/Phosphotyrosine-binding domain (PTB)"/>
    <property type="match status" value="1"/>
</dbReference>
<dbReference type="Gene3D" id="3.40.50.10330">
    <property type="entry name" value="Probable inorganic polyphosphate/atp-NAD kinase, domain 1"/>
    <property type="match status" value="1"/>
</dbReference>
<dbReference type="Gene3D" id="1.10.150.50">
    <property type="entry name" value="Transcription Factor, Ets-1"/>
    <property type="match status" value="1"/>
</dbReference>
<dbReference type="InterPro" id="IPR017438">
    <property type="entry name" value="ATP-NAD_kinase_N"/>
</dbReference>
<dbReference type="InterPro" id="IPR046349">
    <property type="entry name" value="C1-like_sf"/>
</dbReference>
<dbReference type="InterPro" id="IPR037607">
    <property type="entry name" value="DGK"/>
</dbReference>
<dbReference type="InterPro" id="IPR054474">
    <property type="entry name" value="DGKD_4H"/>
</dbReference>
<dbReference type="InterPro" id="IPR000756">
    <property type="entry name" value="Diacylglycerol_kin_accessory"/>
</dbReference>
<dbReference type="InterPro" id="IPR001206">
    <property type="entry name" value="Diacylglycerol_kinase_cat_dom"/>
</dbReference>
<dbReference type="InterPro" id="IPR016064">
    <property type="entry name" value="NAD/diacylglycerol_kinase_sf"/>
</dbReference>
<dbReference type="InterPro" id="IPR002219">
    <property type="entry name" value="PE/DAG-bd"/>
</dbReference>
<dbReference type="InterPro" id="IPR011993">
    <property type="entry name" value="PH-like_dom_sf"/>
</dbReference>
<dbReference type="InterPro" id="IPR001849">
    <property type="entry name" value="PH_domain"/>
</dbReference>
<dbReference type="InterPro" id="IPR001660">
    <property type="entry name" value="SAM"/>
</dbReference>
<dbReference type="InterPro" id="IPR013761">
    <property type="entry name" value="SAM/pointed_sf"/>
</dbReference>
<dbReference type="PANTHER" id="PTHR11255">
    <property type="entry name" value="DIACYLGLYCEROL KINASE"/>
    <property type="match status" value="1"/>
</dbReference>
<dbReference type="PANTHER" id="PTHR11255:SF109">
    <property type="entry name" value="DIACYLGLYCEROL KINASE ETA"/>
    <property type="match status" value="1"/>
</dbReference>
<dbReference type="Pfam" id="PF00130">
    <property type="entry name" value="C1_1"/>
    <property type="match status" value="2"/>
</dbReference>
<dbReference type="Pfam" id="PF00609">
    <property type="entry name" value="DAGK_acc"/>
    <property type="match status" value="1"/>
</dbReference>
<dbReference type="Pfam" id="PF00781">
    <property type="entry name" value="DAGK_cat"/>
    <property type="match status" value="1"/>
</dbReference>
<dbReference type="Pfam" id="PF22944">
    <property type="entry name" value="DGKD_4H"/>
    <property type="match status" value="1"/>
</dbReference>
<dbReference type="Pfam" id="PF00169">
    <property type="entry name" value="PH"/>
    <property type="match status" value="1"/>
</dbReference>
<dbReference type="Pfam" id="PF00536">
    <property type="entry name" value="SAM_1"/>
    <property type="match status" value="1"/>
</dbReference>
<dbReference type="SMART" id="SM00109">
    <property type="entry name" value="C1"/>
    <property type="match status" value="2"/>
</dbReference>
<dbReference type="SMART" id="SM00045">
    <property type="entry name" value="DAGKa"/>
    <property type="match status" value="1"/>
</dbReference>
<dbReference type="SMART" id="SM00046">
    <property type="entry name" value="DAGKc"/>
    <property type="match status" value="1"/>
</dbReference>
<dbReference type="SMART" id="SM00233">
    <property type="entry name" value="PH"/>
    <property type="match status" value="1"/>
</dbReference>
<dbReference type="SMART" id="SM00454">
    <property type="entry name" value="SAM"/>
    <property type="match status" value="1"/>
</dbReference>
<dbReference type="SUPFAM" id="SSF57889">
    <property type="entry name" value="Cysteine-rich domain"/>
    <property type="match status" value="2"/>
</dbReference>
<dbReference type="SUPFAM" id="SSF111331">
    <property type="entry name" value="NAD kinase/diacylglycerol kinase-like"/>
    <property type="match status" value="2"/>
</dbReference>
<dbReference type="SUPFAM" id="SSF50729">
    <property type="entry name" value="PH domain-like"/>
    <property type="match status" value="1"/>
</dbReference>
<dbReference type="SUPFAM" id="SSF47769">
    <property type="entry name" value="SAM/Pointed domain"/>
    <property type="match status" value="1"/>
</dbReference>
<dbReference type="PROSITE" id="PS50146">
    <property type="entry name" value="DAGK"/>
    <property type="match status" value="1"/>
</dbReference>
<dbReference type="PROSITE" id="PS50003">
    <property type="entry name" value="PH_DOMAIN"/>
    <property type="match status" value="1"/>
</dbReference>
<dbReference type="PROSITE" id="PS50105">
    <property type="entry name" value="SAM_DOMAIN"/>
    <property type="match status" value="1"/>
</dbReference>
<dbReference type="PROSITE" id="PS00479">
    <property type="entry name" value="ZF_DAG_PE_1"/>
    <property type="match status" value="2"/>
</dbReference>
<dbReference type="PROSITE" id="PS50081">
    <property type="entry name" value="ZF_DAG_PE_2"/>
    <property type="match status" value="2"/>
</dbReference>
<accession>B4K6T8</accession>
<evidence type="ECO:0000250" key="1">
    <source>
        <dbReference type="UniProtKB" id="Q86XP1"/>
    </source>
</evidence>
<evidence type="ECO:0000255" key="2"/>
<evidence type="ECO:0000255" key="3">
    <source>
        <dbReference type="PROSITE-ProRule" id="PRU00145"/>
    </source>
</evidence>
<evidence type="ECO:0000255" key="4">
    <source>
        <dbReference type="PROSITE-ProRule" id="PRU00184"/>
    </source>
</evidence>
<evidence type="ECO:0000255" key="5">
    <source>
        <dbReference type="PROSITE-ProRule" id="PRU00226"/>
    </source>
</evidence>
<evidence type="ECO:0000255" key="6">
    <source>
        <dbReference type="PROSITE-ProRule" id="PRU00783"/>
    </source>
</evidence>
<evidence type="ECO:0000256" key="7">
    <source>
        <dbReference type="SAM" id="MobiDB-lite"/>
    </source>
</evidence>
<evidence type="ECO:0000312" key="8">
    <source>
        <dbReference type="EMBL" id="EDW14204.1"/>
    </source>
</evidence>
<gene>
    <name type="ORF">GI24133</name>
</gene>
<protein>
    <recommendedName>
        <fullName evidence="1">Diacylglycerol kinase eta</fullName>
        <shortName evidence="1">DAG kinase eta</shortName>
        <ecNumber>2.7.1.107</ecNumber>
    </recommendedName>
</protein>
<comment type="function">
    <text evidence="1">Phosphorylates diacylglycerol (DAG) to generate phosphatidic acid (PA).</text>
</comment>
<comment type="catalytic activity">
    <reaction>
        <text>a 1,2-diacyl-sn-glycerol + ATP = a 1,2-diacyl-sn-glycero-3-phosphate + ADP + H(+)</text>
        <dbReference type="Rhea" id="RHEA:10272"/>
        <dbReference type="ChEBI" id="CHEBI:15378"/>
        <dbReference type="ChEBI" id="CHEBI:17815"/>
        <dbReference type="ChEBI" id="CHEBI:30616"/>
        <dbReference type="ChEBI" id="CHEBI:58608"/>
        <dbReference type="ChEBI" id="CHEBI:456216"/>
        <dbReference type="EC" id="2.7.1.107"/>
    </reaction>
</comment>
<comment type="subcellular location">
    <subcellularLocation>
        <location evidence="1">Cytoplasm</location>
    </subcellularLocation>
</comment>
<comment type="similarity">
    <text evidence="2">Belongs to the eukaryotic diacylglycerol kinase family.</text>
</comment>